<reference key="1">
    <citation type="journal article" date="2003" name="J. Virol. Methods">
        <title>An improved method for recovering rabies virus from cloned cDNA.</title>
        <authorList>
            <person name="Inoue K."/>
            <person name="Shoji Y."/>
            <person name="Kurane I."/>
            <person name="Iijima T."/>
            <person name="Sakai T."/>
            <person name="Morimoto K."/>
        </authorList>
    </citation>
    <scope>NUCLEOTIDE SEQUENCE [GENOMIC RNA]</scope>
</reference>
<reference key="2">
    <citation type="journal article" date="1999" name="Microbiol. Immunol.">
        <title>Intracellular behavior of rabies virus matrix protein (M) is determined by the viral glycoprotein (G).</title>
        <authorList>
            <person name="Nakahara K."/>
            <person name="Ohnuma H."/>
            <person name="Sugita S."/>
            <person name="Yasuoka K."/>
            <person name="Nakahara T."/>
            <person name="Tochikura T.S."/>
            <person name="Kawai A."/>
        </authorList>
    </citation>
    <scope>SUBCELLULAR LOCATION</scope>
    <scope>INTERACTION WITH GLYCOPROTEIN</scope>
</reference>
<reference key="3">
    <citation type="journal article" date="2003" name="Microbiol. Immunol.">
        <title>Characterization of a slow-migrating component of the rabies virus matrix protein strongly associated with the viral glycoprotein.</title>
        <authorList>
            <person name="Nakahara T."/>
            <person name="Toriumi H."/>
            <person name="Irie T."/>
            <person name="Takahashi T."/>
            <person name="Ameyama S."/>
            <person name="Mizukoshi M."/>
            <person name="Kawai A."/>
        </authorList>
    </citation>
    <scope>INTERACTION WITH GLYCOPROTEIN</scope>
</reference>
<accession>Q8B6J7</accession>
<organism>
    <name type="scientific">Rabies virus (strain HEP-Flury)</name>
    <name type="common">RABV</name>
    <dbReference type="NCBI Taxonomy" id="11296"/>
    <lineage>
        <taxon>Viruses</taxon>
        <taxon>Riboviria</taxon>
        <taxon>Orthornavirae</taxon>
        <taxon>Negarnaviricota</taxon>
        <taxon>Haploviricotina</taxon>
        <taxon>Monjiviricetes</taxon>
        <taxon>Mononegavirales</taxon>
        <taxon>Rhabdoviridae</taxon>
        <taxon>Alpharhabdovirinae</taxon>
        <taxon>Lyssavirus</taxon>
        <taxon>Lyssavirus rabies</taxon>
    </lineage>
</organism>
<comment type="function">
    <text evidence="2 3">Plays a major role in assembly, budding and uncoating of virion after membrane fusion. Completely covers the ribonucleoprotein coil and keep it in condensed bullet-shaped form. Inhibits viral transcription and stimulates replication. Plays a major role in early induction of TRAIL-mediated apoptosis in infected neurons (By similarity). Inhibits the integrated stress response (ISR) in the infected cell by blocking the formation of stress granules (By similarity).</text>
</comment>
<comment type="subunit">
    <text evidence="2">Homomultimer. Interacts with nucleoprotein and with the cytoplasmic domain of glycoprotein. Interacts with host ATP6V1A; this interaction plays an important role in virion uncoating after viral entry.</text>
</comment>
<comment type="subcellular location">
    <subcellularLocation>
        <location evidence="6">Virion membrane</location>
        <topology evidence="6">Peripheral membrane protein</topology>
    </subcellularLocation>
    <subcellularLocation>
        <location evidence="1">Host endomembrane system</location>
        <topology evidence="1">Peripheral membrane protein</topology>
    </subcellularLocation>
    <subcellularLocation>
        <location evidence="2">Host cytoplasm</location>
    </subcellularLocation>
</comment>
<comment type="domain">
    <text evidence="7">Late-budding domains (L domains) are short sequence motifs essential for viral particle budding. They recruit proteins of the host ESCRT machinery (Endosomal Sorting Complex Required for Transport) or ESCRT-associated proteins. Matrix protein contains one L domain: a PPXY motif which potentially interacts with the WW domain 3 of NEDD4 E3 ubiquitin ligase (Potential).</text>
</comment>
<comment type="miscellaneous">
    <text evidence="1">Most abundant protein in the virion.</text>
</comment>
<comment type="similarity">
    <text evidence="7">Belongs to the lyssavirus matrix protein family.</text>
</comment>
<organismHost>
    <name type="scientific">Homo sapiens</name>
    <name type="common">Human</name>
    <dbReference type="NCBI Taxonomy" id="9606"/>
</organismHost>
<organismHost>
    <name type="scientific">Mammalia</name>
    <dbReference type="NCBI Taxonomy" id="40674"/>
</organismHost>
<proteinExistence type="evidence at protein level"/>
<evidence type="ECO:0000250" key="1"/>
<evidence type="ECO:0000250" key="2">
    <source>
        <dbReference type="UniProtKB" id="P16287"/>
    </source>
</evidence>
<evidence type="ECO:0000250" key="3">
    <source>
        <dbReference type="UniProtKB" id="P25224"/>
    </source>
</evidence>
<evidence type="ECO:0000255" key="4"/>
<evidence type="ECO:0000256" key="5">
    <source>
        <dbReference type="SAM" id="MobiDB-lite"/>
    </source>
</evidence>
<evidence type="ECO:0000269" key="6">
    <source>
    </source>
</evidence>
<evidence type="ECO:0000305" key="7"/>
<name>MATRX_RABVH</name>
<dbReference type="EMBL" id="AB085828">
    <property type="protein sequence ID" value="BAC53867.1"/>
    <property type="molecule type" value="Genomic_RNA"/>
</dbReference>
<dbReference type="SMR" id="Q8B6J7"/>
<dbReference type="Proteomes" id="UP000006846">
    <property type="component" value="Genome"/>
</dbReference>
<dbReference type="GO" id="GO:0030430">
    <property type="term" value="C:host cell cytoplasm"/>
    <property type="evidence" value="ECO:0007669"/>
    <property type="project" value="UniProtKB-SubCell"/>
</dbReference>
<dbReference type="GO" id="GO:0033645">
    <property type="term" value="C:host cell endomembrane system"/>
    <property type="evidence" value="ECO:0007669"/>
    <property type="project" value="UniProtKB-SubCell"/>
</dbReference>
<dbReference type="GO" id="GO:0016020">
    <property type="term" value="C:membrane"/>
    <property type="evidence" value="ECO:0007669"/>
    <property type="project" value="UniProtKB-KW"/>
</dbReference>
<dbReference type="GO" id="GO:0019031">
    <property type="term" value="C:viral envelope"/>
    <property type="evidence" value="ECO:0007669"/>
    <property type="project" value="UniProtKB-KW"/>
</dbReference>
<dbReference type="GO" id="GO:0055036">
    <property type="term" value="C:virion membrane"/>
    <property type="evidence" value="ECO:0007669"/>
    <property type="project" value="UniProtKB-SubCell"/>
</dbReference>
<dbReference type="GO" id="GO:0039660">
    <property type="term" value="F:structural constituent of virion"/>
    <property type="evidence" value="ECO:0007669"/>
    <property type="project" value="UniProtKB-KW"/>
</dbReference>
<dbReference type="GO" id="GO:0039702">
    <property type="term" value="P:viral budding via host ESCRT complex"/>
    <property type="evidence" value="ECO:0007669"/>
    <property type="project" value="UniProtKB-KW"/>
</dbReference>
<dbReference type="FunFam" id="3.10.460.20:FF:000001">
    <property type="entry name" value="Matrix protein"/>
    <property type="match status" value="1"/>
</dbReference>
<dbReference type="Gene3D" id="3.10.460.20">
    <property type="entry name" value="Rhabdovirus matrix protein M2"/>
    <property type="match status" value="1"/>
</dbReference>
<dbReference type="InterPro" id="IPR006870">
    <property type="entry name" value="Rhabdo_M"/>
</dbReference>
<dbReference type="InterPro" id="IPR038617">
    <property type="entry name" value="Rhabdovirus_M_sf"/>
</dbReference>
<dbReference type="Pfam" id="PF04785">
    <property type="entry name" value="Rhabdo_M2"/>
    <property type="match status" value="1"/>
</dbReference>
<sequence>MNFLCKIVKNCRDEDTQKPSPASAPPDGDDLWLPPPEYVPLKELTSKKNMRNFCINGEVKVCSPNGYSFRILRHILRSFDEIYSGNHRMIGLVKVVVGLALSGAPAPEGMNWVYKLRRTLIFQWADSRGPLEGEELEHSQEITWDDDTEFVGLQMRVSARQCHIQGRIWCIDMNSRACQLWSDMSLQTQRSEEDKDSSLLLE</sequence>
<keyword id="KW-0053">Apoptosis</keyword>
<keyword id="KW-1035">Host cytoplasm</keyword>
<keyword id="KW-1043">Host membrane</keyword>
<keyword id="KW-0945">Host-virus interaction</keyword>
<keyword id="KW-0472">Membrane</keyword>
<keyword id="KW-1198">Viral budding</keyword>
<keyword id="KW-1187">Viral budding via the host ESCRT complexes</keyword>
<keyword id="KW-0261">Viral envelope protein</keyword>
<keyword id="KW-0468">Viral matrix protein</keyword>
<keyword id="KW-1188">Viral release from host cell</keyword>
<keyword id="KW-0946">Virion</keyword>
<protein>
    <recommendedName>
        <fullName>Matrix protein</fullName>
    </recommendedName>
    <alternativeName>
        <fullName>Phosphoprotein M2</fullName>
    </alternativeName>
</protein>
<gene>
    <name type="primary">M</name>
</gene>
<feature type="chain" id="PRO_0000295575" description="Matrix protein">
    <location>
        <begin position="1"/>
        <end position="202"/>
    </location>
</feature>
<feature type="region of interest" description="Disordered" evidence="5">
    <location>
        <begin position="14"/>
        <end position="33"/>
    </location>
</feature>
<feature type="region of interest" description="Essential for glycoprotein binding">
    <location>
        <begin position="115"/>
        <end position="151"/>
    </location>
</feature>
<feature type="short sequence motif" description="PPXY motif" evidence="4">
    <location>
        <begin position="35"/>
        <end position="38"/>
    </location>
</feature>
<feature type="site" description="Involved in the inhibition of stress granules formation and contributes therefore to virulence" evidence="3">
    <location>
        <position position="95"/>
    </location>
</feature>